<gene>
    <name type="ordered locus">At1g59790</name>
    <name type="ORF">F23H11.11</name>
</gene>
<sequence length="374" mass="44917">MDSRRMSRPRQIKFEEGWSNIQKGITKLIRILEGEPEPTFYFSECFKLYTIIYDMCVQRSDYSQQLYEKYRKVIEDYTIQTVLPSLREKHDEDMLRELVKRWNNHKIMVKWLSKFFVYIDRHLVRRSKIPIPSLDEVGLTCFLDLVYCEMQSTAKEVVIALIHKEREGEQIDRALVKNVLDIYVENGMGTLEKYEEDFESFMLQDTASYYSRKASRWTEEDSCPDYMIKVEECLKMERERVTHYLHSITEPKLVEKIQNELLVMVTKNRLENEHSGFSALLRDDKKNDLSRIYRLYLPIPKRLGRVADLFKKHITEEGNALIKQADDKTTNQLLIELHNKFIVYVIECFQNHTLFHKVRVLFMCVYLFQQYYIE</sequence>
<organism>
    <name type="scientific">Arabidopsis thaliana</name>
    <name type="common">Mouse-ear cress</name>
    <dbReference type="NCBI Taxonomy" id="3702"/>
    <lineage>
        <taxon>Eukaryota</taxon>
        <taxon>Viridiplantae</taxon>
        <taxon>Streptophyta</taxon>
        <taxon>Embryophyta</taxon>
        <taxon>Tracheophyta</taxon>
        <taxon>Spermatophyta</taxon>
        <taxon>Magnoliopsida</taxon>
        <taxon>eudicotyledons</taxon>
        <taxon>Gunneridae</taxon>
        <taxon>Pentapetalae</taxon>
        <taxon>rosids</taxon>
        <taxon>malvids</taxon>
        <taxon>Brassicales</taxon>
        <taxon>Brassicaceae</taxon>
        <taxon>Camelineae</taxon>
        <taxon>Arabidopsis</taxon>
    </lineage>
</organism>
<evidence type="ECO:0000305" key="1"/>
<name>CLL2_ARATH</name>
<protein>
    <recommendedName>
        <fullName>Putative cullin-like protein 2</fullName>
    </recommendedName>
</protein>
<feature type="chain" id="PRO_0000396853" description="Putative cullin-like protein 2">
    <location>
        <begin position="1"/>
        <end position="374"/>
    </location>
</feature>
<accession>Q9XIE9</accession>
<keyword id="KW-1185">Reference proteome</keyword>
<reference key="1">
    <citation type="journal article" date="2000" name="Nature">
        <title>Sequence and analysis of chromosome 1 of the plant Arabidopsis thaliana.</title>
        <authorList>
            <person name="Theologis A."/>
            <person name="Ecker J.R."/>
            <person name="Palm C.J."/>
            <person name="Federspiel N.A."/>
            <person name="Kaul S."/>
            <person name="White O."/>
            <person name="Alonso J."/>
            <person name="Altafi H."/>
            <person name="Araujo R."/>
            <person name="Bowman C.L."/>
            <person name="Brooks S.Y."/>
            <person name="Buehler E."/>
            <person name="Chan A."/>
            <person name="Chao Q."/>
            <person name="Chen H."/>
            <person name="Cheuk R.F."/>
            <person name="Chin C.W."/>
            <person name="Chung M.K."/>
            <person name="Conn L."/>
            <person name="Conway A.B."/>
            <person name="Conway A.R."/>
            <person name="Creasy T.H."/>
            <person name="Dewar K."/>
            <person name="Dunn P."/>
            <person name="Etgu P."/>
            <person name="Feldblyum T.V."/>
            <person name="Feng J.-D."/>
            <person name="Fong B."/>
            <person name="Fujii C.Y."/>
            <person name="Gill J.E."/>
            <person name="Goldsmith A.D."/>
            <person name="Haas B."/>
            <person name="Hansen N.F."/>
            <person name="Hughes B."/>
            <person name="Huizar L."/>
            <person name="Hunter J.L."/>
            <person name="Jenkins J."/>
            <person name="Johnson-Hopson C."/>
            <person name="Khan S."/>
            <person name="Khaykin E."/>
            <person name="Kim C.J."/>
            <person name="Koo H.L."/>
            <person name="Kremenetskaia I."/>
            <person name="Kurtz D.B."/>
            <person name="Kwan A."/>
            <person name="Lam B."/>
            <person name="Langin-Hooper S."/>
            <person name="Lee A."/>
            <person name="Lee J.M."/>
            <person name="Lenz C.A."/>
            <person name="Li J.H."/>
            <person name="Li Y.-P."/>
            <person name="Lin X."/>
            <person name="Liu S.X."/>
            <person name="Liu Z.A."/>
            <person name="Luros J.S."/>
            <person name="Maiti R."/>
            <person name="Marziali A."/>
            <person name="Militscher J."/>
            <person name="Miranda M."/>
            <person name="Nguyen M."/>
            <person name="Nierman W.C."/>
            <person name="Osborne B.I."/>
            <person name="Pai G."/>
            <person name="Peterson J."/>
            <person name="Pham P.K."/>
            <person name="Rizzo M."/>
            <person name="Rooney T."/>
            <person name="Rowley D."/>
            <person name="Sakano H."/>
            <person name="Salzberg S.L."/>
            <person name="Schwartz J.R."/>
            <person name="Shinn P."/>
            <person name="Southwick A.M."/>
            <person name="Sun H."/>
            <person name="Tallon L.J."/>
            <person name="Tambunga G."/>
            <person name="Toriumi M.J."/>
            <person name="Town C.D."/>
            <person name="Utterback T."/>
            <person name="Van Aken S."/>
            <person name="Vaysberg M."/>
            <person name="Vysotskaia V.S."/>
            <person name="Walker M."/>
            <person name="Wu D."/>
            <person name="Yu G."/>
            <person name="Fraser C.M."/>
            <person name="Venter J.C."/>
            <person name="Davis R.W."/>
        </authorList>
    </citation>
    <scope>NUCLEOTIDE SEQUENCE [LARGE SCALE GENOMIC DNA]</scope>
    <source>
        <strain>cv. Columbia</strain>
    </source>
</reference>
<reference key="2">
    <citation type="journal article" date="2017" name="Plant J.">
        <title>Araport11: a complete reannotation of the Arabidopsis thaliana reference genome.</title>
        <authorList>
            <person name="Cheng C.Y."/>
            <person name="Krishnakumar V."/>
            <person name="Chan A.P."/>
            <person name="Thibaud-Nissen F."/>
            <person name="Schobel S."/>
            <person name="Town C.D."/>
        </authorList>
    </citation>
    <scope>GENOME REANNOTATION</scope>
    <source>
        <strain>cv. Columbia</strain>
    </source>
</reference>
<proteinExistence type="inferred from homology"/>
<comment type="similarity">
    <text evidence="1">Belongs to the cullin family.</text>
</comment>
<comment type="sequence caution" evidence="1">
    <conflict type="erroneous gene model prediction">
        <sequence resource="EMBL-CDS" id="AAD39322"/>
    </conflict>
</comment>
<dbReference type="EMBL" id="AC007258">
    <property type="protein sequence ID" value="AAD39322.1"/>
    <property type="status" value="ALT_SEQ"/>
    <property type="molecule type" value="Genomic_DNA"/>
</dbReference>
<dbReference type="EMBL" id="CP002684">
    <property type="protein sequence ID" value="AEE33618.1"/>
    <property type="molecule type" value="Genomic_DNA"/>
</dbReference>
<dbReference type="PIR" id="H96621">
    <property type="entry name" value="H96621"/>
</dbReference>
<dbReference type="RefSeq" id="NP_176188.1">
    <property type="nucleotide sequence ID" value="NM_104672.1"/>
</dbReference>
<dbReference type="SMR" id="Q9XIE9"/>
<dbReference type="FunCoup" id="Q9XIE9">
    <property type="interactions" value="164"/>
</dbReference>
<dbReference type="STRING" id="3702.Q9XIE9"/>
<dbReference type="PaxDb" id="3702-AT1G59790.1"/>
<dbReference type="ProteomicsDB" id="246618"/>
<dbReference type="EnsemblPlants" id="AT1G59790.1">
    <property type="protein sequence ID" value="AT1G59790.1"/>
    <property type="gene ID" value="AT1G59790"/>
</dbReference>
<dbReference type="GeneID" id="842272"/>
<dbReference type="Gramene" id="AT1G59790.1">
    <property type="protein sequence ID" value="AT1G59790.1"/>
    <property type="gene ID" value="AT1G59790"/>
</dbReference>
<dbReference type="KEGG" id="ath:AT1G59790"/>
<dbReference type="Araport" id="AT1G59790"/>
<dbReference type="TAIR" id="AT1G59790"/>
<dbReference type="eggNOG" id="KOG2166">
    <property type="taxonomic scope" value="Eukaryota"/>
</dbReference>
<dbReference type="HOGENOM" id="CLU_004747_2_1_1"/>
<dbReference type="InParanoid" id="Q9XIE9"/>
<dbReference type="OrthoDB" id="27073at2759"/>
<dbReference type="PRO" id="PR:Q9XIE9"/>
<dbReference type="Proteomes" id="UP000006548">
    <property type="component" value="Chromosome 1"/>
</dbReference>
<dbReference type="ExpressionAtlas" id="Q9XIE9">
    <property type="expression patterns" value="baseline and differential"/>
</dbReference>
<dbReference type="GO" id="GO:0031625">
    <property type="term" value="F:ubiquitin protein ligase binding"/>
    <property type="evidence" value="ECO:0007669"/>
    <property type="project" value="InterPro"/>
</dbReference>
<dbReference type="GO" id="GO:0006511">
    <property type="term" value="P:ubiquitin-dependent protein catabolic process"/>
    <property type="evidence" value="ECO:0007669"/>
    <property type="project" value="InterPro"/>
</dbReference>
<dbReference type="FunFam" id="1.20.1310.10:FF:000021">
    <property type="entry name" value="Cullin-1, putative"/>
    <property type="match status" value="1"/>
</dbReference>
<dbReference type="FunFam" id="1.20.1310.10:FF:000025">
    <property type="entry name" value="Cullin-1, putative"/>
    <property type="match status" value="1"/>
</dbReference>
<dbReference type="Gene3D" id="1.20.1310.10">
    <property type="entry name" value="Cullin Repeats"/>
    <property type="match status" value="3"/>
</dbReference>
<dbReference type="InterPro" id="IPR045093">
    <property type="entry name" value="Cullin"/>
</dbReference>
<dbReference type="InterPro" id="IPR001373">
    <property type="entry name" value="Cullin_N"/>
</dbReference>
<dbReference type="InterPro" id="IPR016159">
    <property type="entry name" value="Cullin_repeat-like_dom_sf"/>
</dbReference>
<dbReference type="PANTHER" id="PTHR11932">
    <property type="entry name" value="CULLIN"/>
    <property type="match status" value="1"/>
</dbReference>
<dbReference type="Pfam" id="PF00888">
    <property type="entry name" value="Cullin"/>
    <property type="match status" value="1"/>
</dbReference>
<dbReference type="SUPFAM" id="SSF74788">
    <property type="entry name" value="Cullin repeat-like"/>
    <property type="match status" value="1"/>
</dbReference>